<organism>
    <name type="scientific">Vanderwaltozyma polyspora (strain ATCC 22028 / DSM 70294 / BCRC 21397 / CBS 2163 / NBRC 10782 / NRRL Y-8283 / UCD 57-17)</name>
    <name type="common">Kluyveromyces polysporus</name>
    <dbReference type="NCBI Taxonomy" id="436907"/>
    <lineage>
        <taxon>Eukaryota</taxon>
        <taxon>Fungi</taxon>
        <taxon>Dikarya</taxon>
        <taxon>Ascomycota</taxon>
        <taxon>Saccharomycotina</taxon>
        <taxon>Saccharomycetes</taxon>
        <taxon>Saccharomycetales</taxon>
        <taxon>Saccharomycetaceae</taxon>
        <taxon>Vanderwaltozyma</taxon>
    </lineage>
</organism>
<name>CTU2_VANPO</name>
<dbReference type="EMBL" id="DS480387">
    <property type="protein sequence ID" value="EDO18592.1"/>
    <property type="molecule type" value="Genomic_DNA"/>
</dbReference>
<dbReference type="RefSeq" id="XP_001646450.1">
    <property type="nucleotide sequence ID" value="XM_001646400.1"/>
</dbReference>
<dbReference type="FunCoup" id="A7TGI5">
    <property type="interactions" value="202"/>
</dbReference>
<dbReference type="STRING" id="436907.A7TGI5"/>
<dbReference type="GeneID" id="5546892"/>
<dbReference type="KEGG" id="vpo:Kpol_1048p22"/>
<dbReference type="eggNOG" id="KOG2594">
    <property type="taxonomic scope" value="Eukaryota"/>
</dbReference>
<dbReference type="HOGENOM" id="CLU_024534_1_0_1"/>
<dbReference type="InParanoid" id="A7TGI5"/>
<dbReference type="OMA" id="KQRKQMM"/>
<dbReference type="OrthoDB" id="25129at2759"/>
<dbReference type="PhylomeDB" id="A7TGI5"/>
<dbReference type="UniPathway" id="UPA00988"/>
<dbReference type="Proteomes" id="UP000000267">
    <property type="component" value="Unassembled WGS sequence"/>
</dbReference>
<dbReference type="GO" id="GO:0005829">
    <property type="term" value="C:cytosol"/>
    <property type="evidence" value="ECO:0000250"/>
    <property type="project" value="UniProtKB"/>
</dbReference>
<dbReference type="GO" id="GO:0016779">
    <property type="term" value="F:nucleotidyltransferase activity"/>
    <property type="evidence" value="ECO:0007669"/>
    <property type="project" value="UniProtKB-UniRule"/>
</dbReference>
<dbReference type="GO" id="GO:0016783">
    <property type="term" value="F:sulfurtransferase activity"/>
    <property type="evidence" value="ECO:0007669"/>
    <property type="project" value="TreeGrafter"/>
</dbReference>
<dbReference type="GO" id="GO:0000049">
    <property type="term" value="F:tRNA binding"/>
    <property type="evidence" value="ECO:0007669"/>
    <property type="project" value="InterPro"/>
</dbReference>
<dbReference type="GO" id="GO:0001403">
    <property type="term" value="P:invasive growth in response to glucose limitation"/>
    <property type="evidence" value="ECO:0007669"/>
    <property type="project" value="EnsemblFungi"/>
</dbReference>
<dbReference type="GO" id="GO:0032447">
    <property type="term" value="P:protein urmylation"/>
    <property type="evidence" value="ECO:0007669"/>
    <property type="project" value="UniProtKB-UniRule"/>
</dbReference>
<dbReference type="GO" id="GO:0007124">
    <property type="term" value="P:pseudohyphal growth"/>
    <property type="evidence" value="ECO:0007669"/>
    <property type="project" value="EnsemblFungi"/>
</dbReference>
<dbReference type="GO" id="GO:0034227">
    <property type="term" value="P:tRNA thio-modification"/>
    <property type="evidence" value="ECO:0000250"/>
    <property type="project" value="UniProtKB"/>
</dbReference>
<dbReference type="GO" id="GO:0002143">
    <property type="term" value="P:tRNA wobble position uridine thiolation"/>
    <property type="evidence" value="ECO:0007669"/>
    <property type="project" value="EnsemblFungi"/>
</dbReference>
<dbReference type="GO" id="GO:0002098">
    <property type="term" value="P:tRNA wobble uridine modification"/>
    <property type="evidence" value="ECO:0000250"/>
    <property type="project" value="UniProtKB"/>
</dbReference>
<dbReference type="Gene3D" id="3.40.50.620">
    <property type="entry name" value="HUPs"/>
    <property type="match status" value="1"/>
</dbReference>
<dbReference type="HAMAP" id="MF_03054">
    <property type="entry name" value="CTU2"/>
    <property type="match status" value="1"/>
</dbReference>
<dbReference type="InterPro" id="IPR019407">
    <property type="entry name" value="CTU2"/>
</dbReference>
<dbReference type="InterPro" id="IPR014729">
    <property type="entry name" value="Rossmann-like_a/b/a_fold"/>
</dbReference>
<dbReference type="PANTHER" id="PTHR20882">
    <property type="entry name" value="CYTOPLASMIC TRNA 2-THIOLATION PROTEIN 2"/>
    <property type="match status" value="1"/>
</dbReference>
<dbReference type="PANTHER" id="PTHR20882:SF14">
    <property type="entry name" value="CYTOPLASMIC TRNA 2-THIOLATION PROTEIN 2"/>
    <property type="match status" value="1"/>
</dbReference>
<dbReference type="Pfam" id="PF10288">
    <property type="entry name" value="CTU2"/>
    <property type="match status" value="1"/>
</dbReference>
<dbReference type="SUPFAM" id="SSF52402">
    <property type="entry name" value="Adenine nucleotide alpha hydrolases-like"/>
    <property type="match status" value="1"/>
</dbReference>
<gene>
    <name evidence="1" type="primary">NCS2</name>
    <name evidence="1" type="synonym">CTU2</name>
    <name type="ORF">Kpol_1048p22</name>
</gene>
<comment type="function">
    <text evidence="1">Plays a central role in 2-thiolation of mcm(5)S(2)U at tRNA wobble positions of tRNA(Lys), tRNA(Glu) and tRNA(Gln). May act by forming a heterodimer with NCS6 that ligates sulfur from thiocarboxylated URM1 onto the uridine of tRNAs at wobble position. Prior mcm(5) tRNA modification by the elongator complex is required for 2-thiolation. May also be involved in protein urmylation.</text>
</comment>
<comment type="pathway">
    <text evidence="1">tRNA modification; 5-methoxycarbonylmethyl-2-thiouridine-tRNA biosynthesis.</text>
</comment>
<comment type="subcellular location">
    <subcellularLocation>
        <location evidence="1">Cytoplasm</location>
    </subcellularLocation>
</comment>
<comment type="similarity">
    <text evidence="1">Belongs to the CTU2/NCS2 family.</text>
</comment>
<keyword id="KW-0963">Cytoplasm</keyword>
<keyword id="KW-1185">Reference proteome</keyword>
<keyword id="KW-0819">tRNA processing</keyword>
<protein>
    <recommendedName>
        <fullName evidence="1">Cytoplasmic tRNA 2-thiolation protein 2</fullName>
    </recommendedName>
</protein>
<sequence length="485" mass="56353">MSDSHSHSDILLCQRCNKNHASVISRKEKFCTDCFRNFVSLKQRKQMMSDQYYQDIFKVMYKDKLRSEQDAHLQNLNSKILVPLSFGSSSLVMLDILNDTLLEQSITHRGKTGFTVDVIICFHDEQIQNQIKENVSKLINAKYKENNQKIKFHLVDINQFFDNSPHLQSLVLQETDFLIKSLNLKDQSIIEKKLTLSEILDQCSDRSTYQDLLAFVTKHAIKKYAFQHDFKAILWGHSMTRLADEVISLIVKGRGSAISSSLNTDDFDENYGNKFKNLYPLKDILLTEIDAYCYNSGLHNYLINYNIQDALLVNKINQNTDKIQTNSLKNKTINELARNYFEVIEGDYSNVISTVVRTGDKLAEPKSQENFKISKCNLCMQKIYSDPSQWITSITENKGHPLETDEEKENYQRWKNYNNDKLKNSEMDFFRLNEFVKENGSKACLCYGCTITLNTFKDKSVVWPVHDDKELNSVLEDYVLTDHEE</sequence>
<evidence type="ECO:0000255" key="1">
    <source>
        <dbReference type="HAMAP-Rule" id="MF_03054"/>
    </source>
</evidence>
<feature type="chain" id="PRO_0000369304" description="Cytoplasmic tRNA 2-thiolation protein 2">
    <location>
        <begin position="1"/>
        <end position="485"/>
    </location>
</feature>
<accession>A7TGI5</accession>
<proteinExistence type="inferred from homology"/>
<reference key="1">
    <citation type="journal article" date="2007" name="Proc. Natl. Acad. Sci. U.S.A.">
        <title>Independent sorting-out of thousands of duplicated gene pairs in two yeast species descended from a whole-genome duplication.</title>
        <authorList>
            <person name="Scannell D.R."/>
            <person name="Frank A.C."/>
            <person name="Conant G.C."/>
            <person name="Byrne K.P."/>
            <person name="Woolfit M."/>
            <person name="Wolfe K.H."/>
        </authorList>
    </citation>
    <scope>NUCLEOTIDE SEQUENCE [LARGE SCALE GENOMIC DNA]</scope>
    <source>
        <strain>ATCC 22028 / DSM 70294 / BCRC 21397 / CBS 2163 / NBRC 10782 / NRRL Y-8283 / UCD 57-17</strain>
    </source>
</reference>